<reference key="1">
    <citation type="journal article" date="2005" name="J. Bacteriol.">
        <title>Whole-genome sequencing of Staphylococcus haemolyticus uncovers the extreme plasticity of its genome and the evolution of human-colonizing staphylococcal species.</title>
        <authorList>
            <person name="Takeuchi F."/>
            <person name="Watanabe S."/>
            <person name="Baba T."/>
            <person name="Yuzawa H."/>
            <person name="Ito T."/>
            <person name="Morimoto Y."/>
            <person name="Kuroda M."/>
            <person name="Cui L."/>
            <person name="Takahashi M."/>
            <person name="Ankai A."/>
            <person name="Baba S."/>
            <person name="Fukui S."/>
            <person name="Lee J.C."/>
            <person name="Hiramatsu K."/>
        </authorList>
    </citation>
    <scope>NUCLEOTIDE SEQUENCE [LARGE SCALE GENOMIC DNA]</scope>
    <source>
        <strain>JCSC1435</strain>
    </source>
</reference>
<accession>Q4L5W7</accession>
<protein>
    <recommendedName>
        <fullName evidence="1">Ribosome maturation factor RimP</fullName>
    </recommendedName>
</protein>
<feature type="chain" id="PRO_0000181927" description="Ribosome maturation factor RimP">
    <location>
        <begin position="1"/>
        <end position="155"/>
    </location>
</feature>
<proteinExistence type="inferred from homology"/>
<comment type="function">
    <text evidence="1">Required for maturation of 30S ribosomal subunits.</text>
</comment>
<comment type="subcellular location">
    <subcellularLocation>
        <location evidence="1">Cytoplasm</location>
    </subcellularLocation>
</comment>
<comment type="similarity">
    <text evidence="1">Belongs to the RimP family.</text>
</comment>
<keyword id="KW-0963">Cytoplasm</keyword>
<keyword id="KW-0690">Ribosome biogenesis</keyword>
<organism>
    <name type="scientific">Staphylococcus haemolyticus (strain JCSC1435)</name>
    <dbReference type="NCBI Taxonomy" id="279808"/>
    <lineage>
        <taxon>Bacteria</taxon>
        <taxon>Bacillati</taxon>
        <taxon>Bacillota</taxon>
        <taxon>Bacilli</taxon>
        <taxon>Bacillales</taxon>
        <taxon>Staphylococcaceae</taxon>
        <taxon>Staphylococcus</taxon>
    </lineage>
</organism>
<sequence>MSKITEEVETIITPILDELNFELVEVEYTKEGKDHFLRISIDKEGGVNLNDCTLASEKISEAMDENDPIPDMYYLDVASPGAERPIKKEKDYHNAIDKPVFVSLYAPIEGDKEWLGILKAVDDDTITMEVKEKAKTKQIEIPRNKIAKARHAVMI</sequence>
<gene>
    <name evidence="1" type="primary">rimP</name>
    <name type="ordered locus">SH1649</name>
</gene>
<name>RIMP_STAHJ</name>
<evidence type="ECO:0000255" key="1">
    <source>
        <dbReference type="HAMAP-Rule" id="MF_01077"/>
    </source>
</evidence>
<dbReference type="EMBL" id="AP006716">
    <property type="protein sequence ID" value="BAE04958.1"/>
    <property type="molecule type" value="Genomic_DNA"/>
</dbReference>
<dbReference type="RefSeq" id="WP_011275935.1">
    <property type="nucleotide sequence ID" value="NC_007168.1"/>
</dbReference>
<dbReference type="SMR" id="Q4L5W7"/>
<dbReference type="GeneID" id="93781027"/>
<dbReference type="KEGG" id="sha:SH1649"/>
<dbReference type="eggNOG" id="COG0779">
    <property type="taxonomic scope" value="Bacteria"/>
</dbReference>
<dbReference type="HOGENOM" id="CLU_070525_2_0_9"/>
<dbReference type="OrthoDB" id="9805006at2"/>
<dbReference type="Proteomes" id="UP000000543">
    <property type="component" value="Chromosome"/>
</dbReference>
<dbReference type="GO" id="GO:0005829">
    <property type="term" value="C:cytosol"/>
    <property type="evidence" value="ECO:0007669"/>
    <property type="project" value="TreeGrafter"/>
</dbReference>
<dbReference type="GO" id="GO:0000028">
    <property type="term" value="P:ribosomal small subunit assembly"/>
    <property type="evidence" value="ECO:0007669"/>
    <property type="project" value="TreeGrafter"/>
</dbReference>
<dbReference type="GO" id="GO:0006412">
    <property type="term" value="P:translation"/>
    <property type="evidence" value="ECO:0007669"/>
    <property type="project" value="TreeGrafter"/>
</dbReference>
<dbReference type="CDD" id="cd01734">
    <property type="entry name" value="YlxS_C"/>
    <property type="match status" value="1"/>
</dbReference>
<dbReference type="FunFam" id="3.30.300.70:FF:000001">
    <property type="entry name" value="Ribosome maturation factor RimP"/>
    <property type="match status" value="1"/>
</dbReference>
<dbReference type="Gene3D" id="2.30.30.180">
    <property type="entry name" value="Ribosome maturation factor RimP, C-terminal domain"/>
    <property type="match status" value="1"/>
</dbReference>
<dbReference type="Gene3D" id="3.30.300.70">
    <property type="entry name" value="RimP-like superfamily, N-terminal"/>
    <property type="match status" value="1"/>
</dbReference>
<dbReference type="HAMAP" id="MF_01077">
    <property type="entry name" value="RimP"/>
    <property type="match status" value="1"/>
</dbReference>
<dbReference type="InterPro" id="IPR003728">
    <property type="entry name" value="Ribosome_maturation_RimP"/>
</dbReference>
<dbReference type="InterPro" id="IPR028998">
    <property type="entry name" value="RimP_C"/>
</dbReference>
<dbReference type="InterPro" id="IPR036847">
    <property type="entry name" value="RimP_C_sf"/>
</dbReference>
<dbReference type="InterPro" id="IPR028989">
    <property type="entry name" value="RimP_N"/>
</dbReference>
<dbReference type="InterPro" id="IPR035956">
    <property type="entry name" value="RimP_N_sf"/>
</dbReference>
<dbReference type="NCBIfam" id="NF000928">
    <property type="entry name" value="PRK00092.1-2"/>
    <property type="match status" value="1"/>
</dbReference>
<dbReference type="PANTHER" id="PTHR33867">
    <property type="entry name" value="RIBOSOME MATURATION FACTOR RIMP"/>
    <property type="match status" value="1"/>
</dbReference>
<dbReference type="PANTHER" id="PTHR33867:SF1">
    <property type="entry name" value="RIBOSOME MATURATION FACTOR RIMP"/>
    <property type="match status" value="1"/>
</dbReference>
<dbReference type="Pfam" id="PF17384">
    <property type="entry name" value="DUF150_C"/>
    <property type="match status" value="1"/>
</dbReference>
<dbReference type="Pfam" id="PF02576">
    <property type="entry name" value="RimP_N"/>
    <property type="match status" value="1"/>
</dbReference>
<dbReference type="SUPFAM" id="SSF74942">
    <property type="entry name" value="YhbC-like, C-terminal domain"/>
    <property type="match status" value="1"/>
</dbReference>
<dbReference type="SUPFAM" id="SSF75420">
    <property type="entry name" value="YhbC-like, N-terminal domain"/>
    <property type="match status" value="1"/>
</dbReference>